<organism>
    <name type="scientific">Drosophila virilis</name>
    <name type="common">Fruit fly</name>
    <dbReference type="NCBI Taxonomy" id="7244"/>
    <lineage>
        <taxon>Eukaryota</taxon>
        <taxon>Metazoa</taxon>
        <taxon>Ecdysozoa</taxon>
        <taxon>Arthropoda</taxon>
        <taxon>Hexapoda</taxon>
        <taxon>Insecta</taxon>
        <taxon>Pterygota</taxon>
        <taxon>Neoptera</taxon>
        <taxon>Endopterygota</taxon>
        <taxon>Diptera</taxon>
        <taxon>Brachycera</taxon>
        <taxon>Muscomorpha</taxon>
        <taxon>Ephydroidea</taxon>
        <taxon>Drosophilidae</taxon>
        <taxon>Drosophila</taxon>
    </lineage>
</organism>
<dbReference type="EMBL" id="U48595">
    <property type="protein sequence ID" value="AAC47262.1"/>
    <property type="molecule type" value="Genomic_DNA"/>
</dbReference>
<dbReference type="SMR" id="Q24735"/>
<dbReference type="GlyCosmos" id="Q24735">
    <property type="glycosylation" value="5 sites, No reported glycans"/>
</dbReference>
<dbReference type="eggNOG" id="KOG3900">
    <property type="taxonomic scope" value="Eukaryota"/>
</dbReference>
<dbReference type="OrthoDB" id="5987191at2759"/>
<dbReference type="ChiTaRS" id="Gbeta13F">
    <property type="organism name" value="fly"/>
</dbReference>
<dbReference type="GO" id="GO:0005615">
    <property type="term" value="C:extracellular space"/>
    <property type="evidence" value="ECO:0007669"/>
    <property type="project" value="UniProtKB-KW"/>
</dbReference>
<dbReference type="GO" id="GO:0005125">
    <property type="term" value="F:cytokine activity"/>
    <property type="evidence" value="ECO:0007669"/>
    <property type="project" value="UniProtKB-KW"/>
</dbReference>
<dbReference type="GO" id="GO:0008083">
    <property type="term" value="F:growth factor activity"/>
    <property type="evidence" value="ECO:0007669"/>
    <property type="project" value="UniProtKB-KW"/>
</dbReference>
<dbReference type="CDD" id="cd13761">
    <property type="entry name" value="TGF_beta_BMP5_like"/>
    <property type="match status" value="1"/>
</dbReference>
<dbReference type="FunFam" id="2.10.90.10:FF:000003">
    <property type="entry name" value="Bone morphogenetic protein 5"/>
    <property type="match status" value="1"/>
</dbReference>
<dbReference type="FunFam" id="2.60.120.970:FF:000030">
    <property type="entry name" value="Glass bottom boat"/>
    <property type="match status" value="1"/>
</dbReference>
<dbReference type="Gene3D" id="2.60.120.970">
    <property type="match status" value="1"/>
</dbReference>
<dbReference type="Gene3D" id="2.10.90.10">
    <property type="entry name" value="Cystine-knot cytokines"/>
    <property type="match status" value="1"/>
</dbReference>
<dbReference type="InterPro" id="IPR029034">
    <property type="entry name" value="Cystine-knot_cytokine"/>
</dbReference>
<dbReference type="InterPro" id="IPR001839">
    <property type="entry name" value="TGF-b_C"/>
</dbReference>
<dbReference type="InterPro" id="IPR001111">
    <property type="entry name" value="TGF-b_propeptide"/>
</dbReference>
<dbReference type="InterPro" id="IPR015615">
    <property type="entry name" value="TGF-beta-rel"/>
</dbReference>
<dbReference type="InterPro" id="IPR017948">
    <property type="entry name" value="TGFb_CS"/>
</dbReference>
<dbReference type="PANTHER" id="PTHR11848:SF310">
    <property type="entry name" value="PROTEIN 60A-RELATED"/>
    <property type="match status" value="1"/>
</dbReference>
<dbReference type="PANTHER" id="PTHR11848">
    <property type="entry name" value="TGF-BETA FAMILY"/>
    <property type="match status" value="1"/>
</dbReference>
<dbReference type="Pfam" id="PF00019">
    <property type="entry name" value="TGF_beta"/>
    <property type="match status" value="1"/>
</dbReference>
<dbReference type="Pfam" id="PF00688">
    <property type="entry name" value="TGFb_propeptide"/>
    <property type="match status" value="1"/>
</dbReference>
<dbReference type="SMART" id="SM00204">
    <property type="entry name" value="TGFB"/>
    <property type="match status" value="1"/>
</dbReference>
<dbReference type="SUPFAM" id="SSF57501">
    <property type="entry name" value="Cystine-knot cytokines"/>
    <property type="match status" value="1"/>
</dbReference>
<dbReference type="PROSITE" id="PS00250">
    <property type="entry name" value="TGF_BETA_1"/>
    <property type="match status" value="1"/>
</dbReference>
<dbReference type="PROSITE" id="PS51362">
    <property type="entry name" value="TGF_BETA_2"/>
    <property type="match status" value="1"/>
</dbReference>
<name>60A_DROVI</name>
<gene>
    <name type="primary">gbb</name>
    <name type="synonym">60A</name>
    <name type="synonym">TGFb-60A</name>
</gene>
<accession>Q24735</accession>
<proteinExistence type="inferred from homology"/>
<keyword id="KW-0202">Cytokine</keyword>
<keyword id="KW-1015">Disulfide bond</keyword>
<keyword id="KW-0325">Glycoprotein</keyword>
<keyword id="KW-0339">Growth factor</keyword>
<keyword id="KW-0964">Secreted</keyword>
<keyword id="KW-0732">Signal</keyword>
<comment type="subunit">
    <text evidence="1">Homodimer; disulfide-linked.</text>
</comment>
<comment type="subcellular location">
    <subcellularLocation>
        <location evidence="1">Secreted</location>
    </subcellularLocation>
</comment>
<comment type="similarity">
    <text evidence="4">Belongs to the TGF-beta family.</text>
</comment>
<protein>
    <recommendedName>
        <fullName>Protein 60A</fullName>
    </recommendedName>
    <alternativeName>
        <fullName>Protein glass bottom boat</fullName>
    </alternativeName>
</protein>
<feature type="signal peptide" evidence="2">
    <location>
        <begin position="1"/>
        <end position="27"/>
    </location>
</feature>
<feature type="propeptide" id="PRO_0000033662" evidence="2">
    <location>
        <begin position="28"/>
        <end position="317"/>
    </location>
</feature>
<feature type="chain" id="PRO_0000033663" description="Protein 60A">
    <location>
        <begin position="318"/>
        <end position="436"/>
    </location>
</feature>
<feature type="region of interest" description="Disordered" evidence="3">
    <location>
        <begin position="293"/>
        <end position="322"/>
    </location>
</feature>
<feature type="compositionally biased region" description="Basic residues" evidence="3">
    <location>
        <begin position="301"/>
        <end position="316"/>
    </location>
</feature>
<feature type="glycosylation site" description="N-linked (GlcNAc...) asparagine" evidence="2">
    <location>
        <position position="102"/>
    </location>
</feature>
<feature type="glycosylation site" description="N-linked (GlcNAc...) asparagine" evidence="2">
    <location>
        <position position="114"/>
    </location>
</feature>
<feature type="glycosylation site" description="N-linked (GlcNAc...) asparagine" evidence="2">
    <location>
        <position position="217"/>
    </location>
</feature>
<feature type="glycosylation site" description="N-linked (GlcNAc...) asparagine" evidence="2">
    <location>
        <position position="229"/>
    </location>
</feature>
<feature type="glycosylation site" description="N-linked (GlcNAc...) asparagine" evidence="2">
    <location>
        <position position="377"/>
    </location>
</feature>
<feature type="disulfide bond" evidence="1">
    <location>
        <begin position="335"/>
        <end position="401"/>
    </location>
</feature>
<feature type="disulfide bond" evidence="1">
    <location>
        <begin position="364"/>
        <end position="433"/>
    </location>
</feature>
<feature type="disulfide bond" evidence="1">
    <location>
        <begin position="368"/>
        <end position="435"/>
    </location>
</feature>
<feature type="disulfide bond" description="Interchain" evidence="1">
    <location>
        <position position="400"/>
    </location>
</feature>
<reference key="1">
    <citation type="journal article" date="1996" name="Biochim. Biophys. Acta">
        <title>Isolation and sequence of the Drosophila virilis 60 A gene, a transforming growth factor-beta superfamily member related to vertebrate bone morphogenetic proteins.</title>
        <authorList>
            <person name="Du W."/>
            <person name="Doctor J.S."/>
        </authorList>
    </citation>
    <scope>NUCLEOTIDE SEQUENCE [GENOMIC DNA]</scope>
</reference>
<sequence>MTASLVVLPSLWLILIIFTAPYTHCTQSGIYIDNGKDQTVMERVLTDDDKLDVSHEILEFLGIAARPLHHKSHGLSLRKSAPKFLLDVYYRITAEEGLAIKNKSDHSRSKRDANESEQNFITDLDKRAIDESDIIMTFLNKRNHNVEEMRHEHGRRLWFDVNNIPTDNYLMMAELRIYQNSNEGKWTTTNKQFTVTVYMLRSGGSAPNMLEPLSSVNTTGDYVGWLELNVTEALHDWRVNSNENHGIYIGAHALNKPEREIKLDDIGLIHRRTKVDDENQPFMIGFFRGPELIKSTSGHSTQKRTKRSTLHQRKKSKSEPVNPFIENSIENTRSCQMQTLYIDFKDLGWHDWIIAPEGYGAFYCSGECNFPLNAHMNATNHAIVQTLVHLLEPKRVPKPCCAPTRLGALPVLYHLNDENVNLKKYRNMIVKSCGCH</sequence>
<evidence type="ECO:0000250" key="1"/>
<evidence type="ECO:0000255" key="2"/>
<evidence type="ECO:0000256" key="3">
    <source>
        <dbReference type="SAM" id="MobiDB-lite"/>
    </source>
</evidence>
<evidence type="ECO:0000305" key="4"/>